<comment type="function">
    <text evidence="2 3">Multifunctional RNA-binding protein that recognizes the K-turn motif in ribosomal RNA, the RNA component of RNase P, box H/ACA, box C/D and box C'/D' sRNAs. Component of the 70S ribosome (PubMed:23222135). Component of a box C/D small ribonucleoprotein (sRNP) particle that is involved in pre-rRNA and tRNA processing. Utilizes the methyl donor S-adenosyl-L-methionine to catalyze the site-specific 2'-hydroxyl methylation of ribose moieties in rRNA and tRNA. Site specificity is provided by a guide RNA that base pairs with the substrate. Methylation occurs at a characteristic distance from the sequence involved in base pairing with the guide RNA.</text>
</comment>
<comment type="subunit">
    <text evidence="2 3">May be present in up to 3 copies per 70S ribosome (PubMed:23222135). Part of the 50S ribosomal subunit, where it binds 23S rRNA at its canonical site near the L1 stalk, as well as a possible second 50S binding site near helix 25 and a possible third site on the beak of the 30S subunit (PubMed:23222135). Component of box C/D small ribonucleoprotein (sRNP) particles that contain rpl7ae, FlpA and nop5, plus a guide RNA. These sRNP particles form homodimers, giving rise to an asymmetric holoenzyme. Probably part of the RNase P complex (PubMed:20864039).</text>
</comment>
<comment type="subcellular location">
    <subcellularLocation>
        <location evidence="1">Cytoplasm</location>
    </subcellularLocation>
</comment>
<comment type="similarity">
    <text evidence="1">Belongs to the eukaryotic ribosomal protein eL8 family.</text>
</comment>
<comment type="sequence caution" evidence="4">
    <conflict type="erroneous initiation">
        <sequence resource="EMBL-CDS" id="AAL81491"/>
    </conflict>
    <text>Extended N-terminus.</text>
</comment>
<feature type="chain" id="PRO_0000136802" description="Large ribosomal subunit protein eL8">
    <location>
        <begin position="1"/>
        <end position="123"/>
    </location>
</feature>
<feature type="helix" evidence="7">
    <location>
        <begin position="13"/>
        <end position="29"/>
    </location>
</feature>
<feature type="strand" evidence="7">
    <location>
        <begin position="30"/>
        <end position="35"/>
    </location>
</feature>
<feature type="helix" evidence="7">
    <location>
        <begin position="36"/>
        <end position="44"/>
    </location>
</feature>
<feature type="strand" evidence="7">
    <location>
        <begin position="49"/>
        <end position="55"/>
    </location>
</feature>
<feature type="helix" evidence="7">
    <location>
        <begin position="60"/>
        <end position="62"/>
    </location>
</feature>
<feature type="turn" evidence="7">
    <location>
        <begin position="63"/>
        <end position="65"/>
    </location>
</feature>
<feature type="helix" evidence="7">
    <location>
        <begin position="66"/>
        <end position="73"/>
    </location>
</feature>
<feature type="strand" evidence="7">
    <location>
        <begin position="77"/>
        <end position="81"/>
    </location>
</feature>
<feature type="helix" evidence="7">
    <location>
        <begin position="83"/>
        <end position="89"/>
    </location>
</feature>
<feature type="strand" evidence="6">
    <location>
        <begin position="92"/>
        <end position="94"/>
    </location>
</feature>
<feature type="strand" evidence="7">
    <location>
        <begin position="97"/>
        <end position="103"/>
    </location>
</feature>
<feature type="helix" evidence="7">
    <location>
        <begin position="105"/>
        <end position="107"/>
    </location>
</feature>
<feature type="helix" evidence="7">
    <location>
        <begin position="108"/>
        <end position="122"/>
    </location>
</feature>
<proteinExistence type="evidence at protein level"/>
<protein>
    <recommendedName>
        <fullName evidence="1">Large ribosomal subunit protein eL8</fullName>
    </recommendedName>
    <alternativeName>
        <fullName>50S ribosomal protein L7Ae</fullName>
    </alternativeName>
    <alternativeName>
        <fullName>Ribosomal protein L8e</fullName>
    </alternativeName>
</protein>
<accession>Q8U160</accession>
<name>RL7A_PYRFU</name>
<organism>
    <name type="scientific">Pyrococcus furiosus (strain ATCC 43587 / DSM 3638 / JCM 8422 / Vc1)</name>
    <dbReference type="NCBI Taxonomy" id="186497"/>
    <lineage>
        <taxon>Archaea</taxon>
        <taxon>Methanobacteriati</taxon>
        <taxon>Methanobacteriota</taxon>
        <taxon>Thermococci</taxon>
        <taxon>Thermococcales</taxon>
        <taxon>Thermococcaceae</taxon>
        <taxon>Pyrococcus</taxon>
    </lineage>
</organism>
<keyword id="KW-0002">3D-structure</keyword>
<keyword id="KW-0963">Cytoplasm</keyword>
<keyword id="KW-1185">Reference proteome</keyword>
<keyword id="KW-0687">Ribonucleoprotein</keyword>
<keyword id="KW-0689">Ribosomal protein</keyword>
<keyword id="KW-0694">RNA-binding</keyword>
<keyword id="KW-0698">rRNA processing</keyword>
<keyword id="KW-0699">rRNA-binding</keyword>
<keyword id="KW-0819">tRNA processing</keyword>
<sequence>MAKPSYVKFEVPKELAEKALQAVEIARDTGKIRKGTNETTKAVERGQAKLVIIAEDVDPEEIVAHLPPLCEEKEIPYIYVPSKKELGAAAGIEVAAASVAIIEPGKARDLVEEIAMKVKELMK</sequence>
<gene>
    <name evidence="1" type="primary">rpl7ae</name>
    <name type="ordered locus">PF1367</name>
</gene>
<dbReference type="EMBL" id="AE009950">
    <property type="protein sequence ID" value="AAL81491.1"/>
    <property type="status" value="ALT_INIT"/>
    <property type="molecule type" value="Genomic_DNA"/>
</dbReference>
<dbReference type="RefSeq" id="WP_014835393.1">
    <property type="nucleotide sequence ID" value="NZ_CP023154.1"/>
</dbReference>
<dbReference type="PDB" id="2HVY">
    <property type="method" value="X-ray"/>
    <property type="resolution" value="2.30 A"/>
    <property type="chains" value="D=1-123"/>
</dbReference>
<dbReference type="PDB" id="3HAX">
    <property type="method" value="X-ray"/>
    <property type="resolution" value="2.11 A"/>
    <property type="chains" value="D=2-123"/>
</dbReference>
<dbReference type="PDB" id="3HAY">
    <property type="method" value="X-ray"/>
    <property type="resolution" value="4.99 A"/>
    <property type="chains" value="D=2-123"/>
</dbReference>
<dbReference type="PDB" id="3HJW">
    <property type="method" value="X-ray"/>
    <property type="resolution" value="2.35 A"/>
    <property type="chains" value="C=3-122"/>
</dbReference>
<dbReference type="PDB" id="3LWO">
    <property type="method" value="X-ray"/>
    <property type="resolution" value="2.86 A"/>
    <property type="chains" value="C=1-123"/>
</dbReference>
<dbReference type="PDB" id="3LWP">
    <property type="method" value="X-ray"/>
    <property type="resolution" value="2.50 A"/>
    <property type="chains" value="C=1-123"/>
</dbReference>
<dbReference type="PDB" id="3LWQ">
    <property type="method" value="X-ray"/>
    <property type="resolution" value="2.68 A"/>
    <property type="chains" value="C=1-123"/>
</dbReference>
<dbReference type="PDB" id="3LWR">
    <property type="method" value="X-ray"/>
    <property type="resolution" value="2.20 A"/>
    <property type="chains" value="C=1-123"/>
</dbReference>
<dbReference type="PDB" id="3LWV">
    <property type="method" value="X-ray"/>
    <property type="resolution" value="2.50 A"/>
    <property type="chains" value="C=1-123"/>
</dbReference>
<dbReference type="PDB" id="3NMU">
    <property type="method" value="X-ray"/>
    <property type="resolution" value="2.73 A"/>
    <property type="chains" value="C/G=2-123"/>
</dbReference>
<dbReference type="PDB" id="3NVI">
    <property type="method" value="X-ray"/>
    <property type="resolution" value="2.71 A"/>
    <property type="chains" value="B/D=2-123"/>
</dbReference>
<dbReference type="PDB" id="3NVK">
    <property type="method" value="X-ray"/>
    <property type="resolution" value="3.21 A"/>
    <property type="chains" value="E/H=2-123"/>
</dbReference>
<dbReference type="PDB" id="4BY9">
    <property type="method" value="NMR"/>
    <property type="chains" value="D/G/J/M=3-123"/>
</dbReference>
<dbReference type="PDB" id="4V4N">
    <property type="method" value="EM"/>
    <property type="resolution" value="9.00 A"/>
    <property type="chains" value="3/G=1-123"/>
</dbReference>
<dbReference type="PDB" id="4V6U">
    <property type="method" value="EM"/>
    <property type="resolution" value="6.60 A"/>
    <property type="chains" value="A3/B4/BG=1-123"/>
</dbReference>
<dbReference type="PDB" id="5JB3">
    <property type="method" value="EM"/>
    <property type="resolution" value="5.34 A"/>
    <property type="chains" value="3=1-123"/>
</dbReference>
<dbReference type="PDB" id="5JBH">
    <property type="method" value="EM"/>
    <property type="resolution" value="5.34 A"/>
    <property type="chains" value="3=1-123"/>
</dbReference>
<dbReference type="PDB" id="6TPH">
    <property type="method" value="NMR"/>
    <property type="chains" value="A=1-123"/>
</dbReference>
<dbReference type="PDB" id="7OZQ">
    <property type="method" value="X-ray"/>
    <property type="resolution" value="1.91 A"/>
    <property type="chains" value="A/B/C/D=1-123"/>
</dbReference>
<dbReference type="PDBsum" id="2HVY"/>
<dbReference type="PDBsum" id="3HAX"/>
<dbReference type="PDBsum" id="3HAY"/>
<dbReference type="PDBsum" id="3HJW"/>
<dbReference type="PDBsum" id="3LWO"/>
<dbReference type="PDBsum" id="3LWP"/>
<dbReference type="PDBsum" id="3LWQ"/>
<dbReference type="PDBsum" id="3LWR"/>
<dbReference type="PDBsum" id="3LWV"/>
<dbReference type="PDBsum" id="3NMU"/>
<dbReference type="PDBsum" id="3NVI"/>
<dbReference type="PDBsum" id="3NVK"/>
<dbReference type="PDBsum" id="4BY9"/>
<dbReference type="PDBsum" id="4V4N"/>
<dbReference type="PDBsum" id="4V6U"/>
<dbReference type="PDBsum" id="5JB3"/>
<dbReference type="PDBsum" id="5JBH"/>
<dbReference type="PDBsum" id="6TPH"/>
<dbReference type="PDBsum" id="7OZQ"/>
<dbReference type="BMRB" id="Q8U160"/>
<dbReference type="EMDB" id="EMD-50611"/>
<dbReference type="EMDB" id="EMD-50612"/>
<dbReference type="EMDB" id="EMD-50613"/>
<dbReference type="EMDB" id="EMD-8149"/>
<dbReference type="SASBDB" id="Q8U160"/>
<dbReference type="SMR" id="Q8U160"/>
<dbReference type="DIP" id="DIP-48528N"/>
<dbReference type="IntAct" id="Q8U160">
    <property type="interactions" value="2"/>
</dbReference>
<dbReference type="STRING" id="186497.PF1367"/>
<dbReference type="PaxDb" id="186497-PF1367"/>
<dbReference type="GeneID" id="41713171"/>
<dbReference type="KEGG" id="pfu:PF1367"/>
<dbReference type="PATRIC" id="fig|186497.12.peg.1430"/>
<dbReference type="eggNOG" id="arCOG01751">
    <property type="taxonomic scope" value="Archaea"/>
</dbReference>
<dbReference type="HOGENOM" id="CLU_084513_4_0_2"/>
<dbReference type="OrthoDB" id="25810at2157"/>
<dbReference type="PhylomeDB" id="Q8U160"/>
<dbReference type="EvolutionaryTrace" id="Q8U160"/>
<dbReference type="Proteomes" id="UP000001013">
    <property type="component" value="Chromosome"/>
</dbReference>
<dbReference type="GO" id="GO:0005737">
    <property type="term" value="C:cytoplasm"/>
    <property type="evidence" value="ECO:0007669"/>
    <property type="project" value="UniProtKB-SubCell"/>
</dbReference>
<dbReference type="GO" id="GO:1990904">
    <property type="term" value="C:ribonucleoprotein complex"/>
    <property type="evidence" value="ECO:0007669"/>
    <property type="project" value="UniProtKB-KW"/>
</dbReference>
<dbReference type="GO" id="GO:0005840">
    <property type="term" value="C:ribosome"/>
    <property type="evidence" value="ECO:0007669"/>
    <property type="project" value="UniProtKB-KW"/>
</dbReference>
<dbReference type="GO" id="GO:0004526">
    <property type="term" value="F:ribonuclease P activity"/>
    <property type="evidence" value="ECO:0007669"/>
    <property type="project" value="UniProtKB-UniRule"/>
</dbReference>
<dbReference type="GO" id="GO:0019843">
    <property type="term" value="F:rRNA binding"/>
    <property type="evidence" value="ECO:0007669"/>
    <property type="project" value="UniProtKB-KW"/>
</dbReference>
<dbReference type="GO" id="GO:0003735">
    <property type="term" value="F:structural constituent of ribosome"/>
    <property type="evidence" value="ECO:0007669"/>
    <property type="project" value="InterPro"/>
</dbReference>
<dbReference type="GO" id="GO:0006364">
    <property type="term" value="P:rRNA processing"/>
    <property type="evidence" value="ECO:0007669"/>
    <property type="project" value="UniProtKB-KW"/>
</dbReference>
<dbReference type="GO" id="GO:0006412">
    <property type="term" value="P:translation"/>
    <property type="evidence" value="ECO:0007669"/>
    <property type="project" value="UniProtKB-UniRule"/>
</dbReference>
<dbReference type="GO" id="GO:0001682">
    <property type="term" value="P:tRNA 5'-leader removal"/>
    <property type="evidence" value="ECO:0007669"/>
    <property type="project" value="UniProtKB-UniRule"/>
</dbReference>
<dbReference type="FunFam" id="3.30.1330.30:FF:000020">
    <property type="entry name" value="50S ribosomal protein L7Ae"/>
    <property type="match status" value="1"/>
</dbReference>
<dbReference type="Gene3D" id="3.30.1330.30">
    <property type="match status" value="1"/>
</dbReference>
<dbReference type="HAMAP" id="MF_00326">
    <property type="entry name" value="Ribosomal_eL8"/>
    <property type="match status" value="1"/>
</dbReference>
<dbReference type="InterPro" id="IPR050257">
    <property type="entry name" value="eL8/uL1-like"/>
</dbReference>
<dbReference type="InterPro" id="IPR029064">
    <property type="entry name" value="Ribosomal_eL30-like_sf"/>
</dbReference>
<dbReference type="InterPro" id="IPR004037">
    <property type="entry name" value="Ribosomal_eL8-like_CS"/>
</dbReference>
<dbReference type="InterPro" id="IPR004038">
    <property type="entry name" value="Ribosomal_eL8/eL30/eS12/Gad45"/>
</dbReference>
<dbReference type="InterPro" id="IPR018492">
    <property type="entry name" value="Ribosomal_eL8/Nhp2"/>
</dbReference>
<dbReference type="InterPro" id="IPR022481">
    <property type="entry name" value="Ribosomal_eL8_arc"/>
</dbReference>
<dbReference type="NCBIfam" id="TIGR03677">
    <property type="entry name" value="eL8_ribo"/>
    <property type="match status" value="1"/>
</dbReference>
<dbReference type="PANTHER" id="PTHR23105">
    <property type="entry name" value="RIBOSOMAL PROTEIN L7AE FAMILY MEMBER"/>
    <property type="match status" value="1"/>
</dbReference>
<dbReference type="Pfam" id="PF01248">
    <property type="entry name" value="Ribosomal_L7Ae"/>
    <property type="match status" value="1"/>
</dbReference>
<dbReference type="PRINTS" id="PR00881">
    <property type="entry name" value="L7ARS6FAMILY"/>
</dbReference>
<dbReference type="PRINTS" id="PR00884">
    <property type="entry name" value="RIBOSOMALHS6"/>
</dbReference>
<dbReference type="SUPFAM" id="SSF55315">
    <property type="entry name" value="L30e-like"/>
    <property type="match status" value="1"/>
</dbReference>
<dbReference type="PROSITE" id="PS01082">
    <property type="entry name" value="RIBOSOMAL_L7AE"/>
    <property type="match status" value="1"/>
</dbReference>
<evidence type="ECO:0000255" key="1">
    <source>
        <dbReference type="HAMAP-Rule" id="MF_00326"/>
    </source>
</evidence>
<evidence type="ECO:0000269" key="2">
    <source>
    </source>
</evidence>
<evidence type="ECO:0000269" key="3">
    <source>
    </source>
</evidence>
<evidence type="ECO:0000305" key="4"/>
<evidence type="ECO:0007744" key="5">
    <source>
        <dbReference type="PDB" id="4V6U"/>
    </source>
</evidence>
<evidence type="ECO:0007829" key="6">
    <source>
        <dbReference type="PDB" id="3NMU"/>
    </source>
</evidence>
<evidence type="ECO:0007829" key="7">
    <source>
        <dbReference type="PDB" id="7OZQ"/>
    </source>
</evidence>
<reference key="1">
    <citation type="journal article" date="1999" name="Genetics">
        <title>Divergence of the hyperthermophilic archaea Pyrococcus furiosus and P. horikoshii inferred from complete genomic sequences.</title>
        <authorList>
            <person name="Maeder D.L."/>
            <person name="Weiss R.B."/>
            <person name="Dunn D.M."/>
            <person name="Cherry J.L."/>
            <person name="Gonzalez J.M."/>
            <person name="DiRuggiero J."/>
            <person name="Robb F.T."/>
        </authorList>
    </citation>
    <scope>NUCLEOTIDE SEQUENCE [LARGE SCALE GENOMIC DNA]</scope>
    <source>
        <strain>ATCC 43587 / DSM 3638 / JCM 8422 / Vc1</strain>
    </source>
</reference>
<reference key="2">
    <citation type="journal article" date="2010" name="Mol. Cell">
        <title>Structural basis for substrate placement by an archaeal box C/D ribonucleoprotein particle.</title>
        <authorList>
            <person name="Xue S."/>
            <person name="Wang R."/>
            <person name="Yang F."/>
            <person name="Terns R.M."/>
            <person name="Terns M.P."/>
            <person name="Zhang X."/>
            <person name="Maxwell E.S."/>
            <person name="Li H."/>
        </authorList>
    </citation>
    <scope>X-RAY CRYSTALLOGRAPHY (2.71 ANGSTROMS) IN COMPLEXES WITH FLPA NOP5 AND BOX C/D RNA</scope>
    <scope>SUBUNIT</scope>
</reference>
<reference evidence="5" key="3">
    <citation type="journal article" date="2013" name="Nucleic Acids Res.">
        <title>Promiscuous behaviour of archaeal ribosomal proteins: implications for eukaryotic ribosome evolution.</title>
        <authorList>
            <person name="Armache J.P."/>
            <person name="Anger A.M."/>
            <person name="Marquez V."/>
            <person name="Franckenberg S."/>
            <person name="Frohlich T."/>
            <person name="Villa E."/>
            <person name="Berninghausen O."/>
            <person name="Thomm M."/>
            <person name="Arnold G.J."/>
            <person name="Beckmann R."/>
            <person name="Wilson D.N."/>
        </authorList>
    </citation>
    <scope>STRUCTURE BY ELECTRON MICROSCOPY (6.6 ANGSTROMS) OF 70S RIBOSOME</scope>
    <scope>SUBUNIT</scope>
</reference>